<proteinExistence type="inferred from homology"/>
<reference key="1">
    <citation type="journal article" date="2000" name="Nature">
        <title>DNA sequence of both chromosomes of the cholera pathogen Vibrio cholerae.</title>
        <authorList>
            <person name="Heidelberg J.F."/>
            <person name="Eisen J.A."/>
            <person name="Nelson W.C."/>
            <person name="Clayton R.A."/>
            <person name="Gwinn M.L."/>
            <person name="Dodson R.J."/>
            <person name="Haft D.H."/>
            <person name="Hickey E.K."/>
            <person name="Peterson J.D."/>
            <person name="Umayam L.A."/>
            <person name="Gill S.R."/>
            <person name="Nelson K.E."/>
            <person name="Read T.D."/>
            <person name="Tettelin H."/>
            <person name="Richardson D.L."/>
            <person name="Ermolaeva M.D."/>
            <person name="Vamathevan J.J."/>
            <person name="Bass S."/>
            <person name="Qin H."/>
            <person name="Dragoi I."/>
            <person name="Sellers P."/>
            <person name="McDonald L.A."/>
            <person name="Utterback T.R."/>
            <person name="Fleischmann R.D."/>
            <person name="Nierman W.C."/>
            <person name="White O."/>
            <person name="Salzberg S.L."/>
            <person name="Smith H.O."/>
            <person name="Colwell R.R."/>
            <person name="Mekalanos J.J."/>
            <person name="Venter J.C."/>
            <person name="Fraser C.M."/>
        </authorList>
    </citation>
    <scope>NUCLEOTIDE SEQUENCE [LARGE SCALE GENOMIC DNA]</scope>
    <source>
        <strain>ATCC 39315 / El Tor Inaba N16961</strain>
    </source>
</reference>
<sequence length="56" mass="6296">MAVQQNRKTRSRRGMRRSHDALTAAALSVDATSGETHLRHNVTAEGYYRGKKVINK</sequence>
<comment type="similarity">
    <text evidence="3">Belongs to the bacterial ribosomal protein bL32 family.</text>
</comment>
<gene>
    <name type="primary">rpmF</name>
    <name type="ordered locus">VC_2025</name>
</gene>
<keyword id="KW-1185">Reference proteome</keyword>
<keyword id="KW-0687">Ribonucleoprotein</keyword>
<keyword id="KW-0689">Ribosomal protein</keyword>
<evidence type="ECO:0000250" key="1"/>
<evidence type="ECO:0000256" key="2">
    <source>
        <dbReference type="SAM" id="MobiDB-lite"/>
    </source>
</evidence>
<evidence type="ECO:0000305" key="3"/>
<organism>
    <name type="scientific">Vibrio cholerae serotype O1 (strain ATCC 39315 / El Tor Inaba N16961)</name>
    <dbReference type="NCBI Taxonomy" id="243277"/>
    <lineage>
        <taxon>Bacteria</taxon>
        <taxon>Pseudomonadati</taxon>
        <taxon>Pseudomonadota</taxon>
        <taxon>Gammaproteobacteria</taxon>
        <taxon>Vibrionales</taxon>
        <taxon>Vibrionaceae</taxon>
        <taxon>Vibrio</taxon>
    </lineage>
</organism>
<accession>Q9KQH3</accession>
<protein>
    <recommendedName>
        <fullName evidence="3">Large ribosomal subunit protein bL32</fullName>
    </recommendedName>
    <alternativeName>
        <fullName>50S ribosomal protein L32</fullName>
    </alternativeName>
</protein>
<name>RL32_VIBCH</name>
<dbReference type="EMBL" id="AE003852">
    <property type="protein sequence ID" value="AAF95173.1"/>
    <property type="molecule type" value="Genomic_DNA"/>
</dbReference>
<dbReference type="PIR" id="B82129">
    <property type="entry name" value="B82129"/>
</dbReference>
<dbReference type="RefSeq" id="NP_231659.1">
    <property type="nucleotide sequence ID" value="NC_002505.1"/>
</dbReference>
<dbReference type="RefSeq" id="WP_000290732.1">
    <property type="nucleotide sequence ID" value="NZ_LT906614.1"/>
</dbReference>
<dbReference type="SMR" id="Q9KQH3"/>
<dbReference type="STRING" id="243277.VC_2025"/>
<dbReference type="DNASU" id="2613404"/>
<dbReference type="EnsemblBacteria" id="AAF95173">
    <property type="protein sequence ID" value="AAF95173"/>
    <property type="gene ID" value="VC_2025"/>
</dbReference>
<dbReference type="GeneID" id="94025234"/>
<dbReference type="KEGG" id="vch:VC_2025"/>
<dbReference type="PATRIC" id="fig|243277.26.peg.1935"/>
<dbReference type="eggNOG" id="COG0333">
    <property type="taxonomic scope" value="Bacteria"/>
</dbReference>
<dbReference type="HOGENOM" id="CLU_129084_2_1_6"/>
<dbReference type="Proteomes" id="UP000000584">
    <property type="component" value="Chromosome 1"/>
</dbReference>
<dbReference type="GO" id="GO:0022625">
    <property type="term" value="C:cytosolic large ribosomal subunit"/>
    <property type="evidence" value="ECO:0000318"/>
    <property type="project" value="GO_Central"/>
</dbReference>
<dbReference type="GO" id="GO:0003735">
    <property type="term" value="F:structural constituent of ribosome"/>
    <property type="evidence" value="ECO:0000318"/>
    <property type="project" value="GO_Central"/>
</dbReference>
<dbReference type="GO" id="GO:0006412">
    <property type="term" value="P:translation"/>
    <property type="evidence" value="ECO:0007669"/>
    <property type="project" value="UniProtKB-UniRule"/>
</dbReference>
<dbReference type="HAMAP" id="MF_00340">
    <property type="entry name" value="Ribosomal_bL32"/>
    <property type="match status" value="1"/>
</dbReference>
<dbReference type="InterPro" id="IPR002677">
    <property type="entry name" value="Ribosomal_bL32"/>
</dbReference>
<dbReference type="InterPro" id="IPR044957">
    <property type="entry name" value="Ribosomal_bL32_bact"/>
</dbReference>
<dbReference type="InterPro" id="IPR011332">
    <property type="entry name" value="Ribosomal_zn-bd"/>
</dbReference>
<dbReference type="NCBIfam" id="TIGR01031">
    <property type="entry name" value="rpmF_bact"/>
    <property type="match status" value="1"/>
</dbReference>
<dbReference type="PANTHER" id="PTHR35534">
    <property type="entry name" value="50S RIBOSOMAL PROTEIN L32"/>
    <property type="match status" value="1"/>
</dbReference>
<dbReference type="PANTHER" id="PTHR35534:SF1">
    <property type="entry name" value="LARGE RIBOSOMAL SUBUNIT PROTEIN BL32"/>
    <property type="match status" value="1"/>
</dbReference>
<dbReference type="Pfam" id="PF01783">
    <property type="entry name" value="Ribosomal_L32p"/>
    <property type="match status" value="1"/>
</dbReference>
<dbReference type="SUPFAM" id="SSF57829">
    <property type="entry name" value="Zn-binding ribosomal proteins"/>
    <property type="match status" value="1"/>
</dbReference>
<feature type="initiator methionine" description="Removed" evidence="1">
    <location>
        <position position="1"/>
    </location>
</feature>
<feature type="chain" id="PRO_0000172433" description="Large ribosomal subunit protein bL32">
    <location>
        <begin position="2"/>
        <end position="56"/>
    </location>
</feature>
<feature type="region of interest" description="Disordered" evidence="2">
    <location>
        <begin position="1"/>
        <end position="21"/>
    </location>
</feature>
<feature type="compositionally biased region" description="Basic residues" evidence="2">
    <location>
        <begin position="7"/>
        <end position="16"/>
    </location>
</feature>